<organism>
    <name type="scientific">Saccharomyces cerevisiae (strain ATCC 204508 / S288c)</name>
    <name type="common">Baker's yeast</name>
    <dbReference type="NCBI Taxonomy" id="559292"/>
    <lineage>
        <taxon>Eukaryota</taxon>
        <taxon>Fungi</taxon>
        <taxon>Dikarya</taxon>
        <taxon>Ascomycota</taxon>
        <taxon>Saccharomycotina</taxon>
        <taxon>Saccharomycetes</taxon>
        <taxon>Saccharomycetales</taxon>
        <taxon>Saccharomycetaceae</taxon>
        <taxon>Saccharomyces</taxon>
    </lineage>
</organism>
<reference key="1">
    <citation type="journal article" date="1996" name="Yeast">
        <title>Sequence analysis of the 43 kb CRM1-YLM9-PET54-DIE2-SMI1-PHO81-YHB4-PFK1 region from the right arm of Saccharomyces cerevisiae chromosome VII.</title>
        <authorList>
            <person name="van der Aart Q.J.M."/>
            <person name="Kleine K."/>
            <person name="Steensma H.Y."/>
        </authorList>
    </citation>
    <scope>NUCLEOTIDE SEQUENCE [GENOMIC DNA]</scope>
    <source>
        <strain>ATCC 204508 / S288c</strain>
    </source>
</reference>
<reference key="2">
    <citation type="journal article" date="1997" name="Nature">
        <title>The nucleotide sequence of Saccharomyces cerevisiae chromosome VII.</title>
        <authorList>
            <person name="Tettelin H."/>
            <person name="Agostoni-Carbone M.L."/>
            <person name="Albermann K."/>
            <person name="Albers M."/>
            <person name="Arroyo J."/>
            <person name="Backes U."/>
            <person name="Barreiros T."/>
            <person name="Bertani I."/>
            <person name="Bjourson A.J."/>
            <person name="Brueckner M."/>
            <person name="Bruschi C.V."/>
            <person name="Carignani G."/>
            <person name="Castagnoli L."/>
            <person name="Cerdan E."/>
            <person name="Clemente M.L."/>
            <person name="Coblenz A."/>
            <person name="Coglievina M."/>
            <person name="Coissac E."/>
            <person name="Defoor E."/>
            <person name="Del Bino S."/>
            <person name="Delius H."/>
            <person name="Delneri D."/>
            <person name="de Wergifosse P."/>
            <person name="Dujon B."/>
            <person name="Durand P."/>
            <person name="Entian K.-D."/>
            <person name="Eraso P."/>
            <person name="Escribano V."/>
            <person name="Fabiani L."/>
            <person name="Fartmann B."/>
            <person name="Feroli F."/>
            <person name="Feuermann M."/>
            <person name="Frontali L."/>
            <person name="Garcia-Gonzalez M."/>
            <person name="Garcia-Saez M.I."/>
            <person name="Goffeau A."/>
            <person name="Guerreiro P."/>
            <person name="Hani J."/>
            <person name="Hansen M."/>
            <person name="Hebling U."/>
            <person name="Hernandez K."/>
            <person name="Heumann K."/>
            <person name="Hilger F."/>
            <person name="Hofmann B."/>
            <person name="Indge K.J."/>
            <person name="James C.M."/>
            <person name="Klima R."/>
            <person name="Koetter P."/>
            <person name="Kramer B."/>
            <person name="Kramer W."/>
            <person name="Lauquin G."/>
            <person name="Leuther H."/>
            <person name="Louis E.J."/>
            <person name="Maillier E."/>
            <person name="Marconi A."/>
            <person name="Martegani E."/>
            <person name="Mazon M.J."/>
            <person name="Mazzoni C."/>
            <person name="McReynolds A.D.K."/>
            <person name="Melchioretto P."/>
            <person name="Mewes H.-W."/>
            <person name="Minenkova O."/>
            <person name="Mueller-Auer S."/>
            <person name="Nawrocki A."/>
            <person name="Netter P."/>
            <person name="Neu R."/>
            <person name="Nombela C."/>
            <person name="Oliver S.G."/>
            <person name="Panzeri L."/>
            <person name="Paoluzi S."/>
            <person name="Plevani P."/>
            <person name="Portetelle D."/>
            <person name="Portillo F."/>
            <person name="Potier S."/>
            <person name="Purnelle B."/>
            <person name="Rieger M."/>
            <person name="Riles L."/>
            <person name="Rinaldi T."/>
            <person name="Robben J."/>
            <person name="Rodrigues-Pousada C."/>
            <person name="Rodriguez-Belmonte E."/>
            <person name="Rodriguez-Torres A.M."/>
            <person name="Rose M."/>
            <person name="Ruzzi M."/>
            <person name="Saliola M."/>
            <person name="Sanchez-Perez M."/>
            <person name="Schaefer B."/>
            <person name="Schaefer M."/>
            <person name="Scharfe M."/>
            <person name="Schmidheini T."/>
            <person name="Schreer A."/>
            <person name="Skala J."/>
            <person name="Souciet J.-L."/>
            <person name="Steensma H.Y."/>
            <person name="Talla E."/>
            <person name="Thierry A."/>
            <person name="Vandenbol M."/>
            <person name="van der Aart Q.J.M."/>
            <person name="Van Dyck L."/>
            <person name="Vanoni M."/>
            <person name="Verhasselt P."/>
            <person name="Voet M."/>
            <person name="Volckaert G."/>
            <person name="Wambutt R."/>
            <person name="Watson M.D."/>
            <person name="Weber N."/>
            <person name="Wedler E."/>
            <person name="Wedler H."/>
            <person name="Wipfli P."/>
            <person name="Wolf K."/>
            <person name="Wright L.F."/>
            <person name="Zaccaria P."/>
            <person name="Zimmermann M."/>
            <person name="Zollner A."/>
            <person name="Kleine K."/>
        </authorList>
    </citation>
    <scope>NUCLEOTIDE SEQUENCE [LARGE SCALE GENOMIC DNA]</scope>
    <source>
        <strain>ATCC 204508 / S288c</strain>
    </source>
</reference>
<reference key="3">
    <citation type="journal article" date="2014" name="G3 (Bethesda)">
        <title>The reference genome sequence of Saccharomyces cerevisiae: Then and now.</title>
        <authorList>
            <person name="Engel S.R."/>
            <person name="Dietrich F.S."/>
            <person name="Fisk D.G."/>
            <person name="Binkley G."/>
            <person name="Balakrishnan R."/>
            <person name="Costanzo M.C."/>
            <person name="Dwight S.S."/>
            <person name="Hitz B.C."/>
            <person name="Karra K."/>
            <person name="Nash R.S."/>
            <person name="Weng S."/>
            <person name="Wong E.D."/>
            <person name="Lloyd P."/>
            <person name="Skrzypek M.S."/>
            <person name="Miyasato S.R."/>
            <person name="Simison M."/>
            <person name="Cherry J.M."/>
        </authorList>
    </citation>
    <scope>GENOME REANNOTATION</scope>
    <source>
        <strain>ATCC 204508 / S288c</strain>
    </source>
</reference>
<reference key="4">
    <citation type="journal article" date="2003" name="Nature">
        <title>Global analysis of protein localization in budding yeast.</title>
        <authorList>
            <person name="Huh W.-K."/>
            <person name="Falvo J.V."/>
            <person name="Gerke L.C."/>
            <person name="Carroll A.S."/>
            <person name="Howson R.W."/>
            <person name="Weissman J.S."/>
            <person name="O'Shea E.K."/>
        </authorList>
    </citation>
    <scope>SUBCELLULAR LOCATION [LARGE SCALE ANALYSIS]</scope>
</reference>
<sequence length="113" mass="13267">MYMIVVKYLYALCSSFFDCILNFNETVFGPSHRAFNPNNIIFIVDFQNFNILDSNMLVSHMTRHLSSWQYPTWVLVLTIRTTVSMHNRCTMRCSQTLESIPFHHTSKTFAFAD</sequence>
<protein>
    <recommendedName>
        <fullName>Uncharacterized protein YGR219W</fullName>
    </recommendedName>
</protein>
<evidence type="ECO:0000269" key="1">
    <source>
    </source>
</evidence>
<dbReference type="EMBL" id="X87941">
    <property type="protein sequence ID" value="CAA61167.1"/>
    <property type="molecule type" value="Genomic_DNA"/>
</dbReference>
<dbReference type="EMBL" id="Z73004">
    <property type="protein sequence ID" value="CAA97247.1"/>
    <property type="molecule type" value="Genomic_DNA"/>
</dbReference>
<dbReference type="EMBL" id="BK006941">
    <property type="status" value="NOT_ANNOTATED_CDS"/>
    <property type="molecule type" value="Genomic_DNA"/>
</dbReference>
<dbReference type="PIR" id="S57682">
    <property type="entry name" value="S57682"/>
</dbReference>
<dbReference type="DIP" id="DIP-4902N"/>
<dbReference type="FunCoup" id="P53307">
    <property type="interactions" value="1"/>
</dbReference>
<dbReference type="IntAct" id="P53307">
    <property type="interactions" value="8"/>
</dbReference>
<dbReference type="PaxDb" id="4932-YGR219W"/>
<dbReference type="EnsemblFungi" id="YGR219W_mRNA">
    <property type="protein sequence ID" value="YGR219W"/>
    <property type="gene ID" value="YGR219W"/>
</dbReference>
<dbReference type="AGR" id="SGD:S000003451"/>
<dbReference type="SGD" id="S000003451">
    <property type="gene designation" value="YGR219W"/>
</dbReference>
<dbReference type="HOGENOM" id="CLU_2135478_0_0_1"/>
<dbReference type="InParanoid" id="P53307"/>
<dbReference type="PRO" id="PR:P53307"/>
<dbReference type="Proteomes" id="UP000002311">
    <property type="component" value="Chromosome VII"/>
</dbReference>
<dbReference type="RNAct" id="P53307">
    <property type="molecule type" value="protein"/>
</dbReference>
<dbReference type="GO" id="GO:0005737">
    <property type="term" value="C:cytoplasm"/>
    <property type="evidence" value="ECO:0007669"/>
    <property type="project" value="UniProtKB-SubCell"/>
</dbReference>
<dbReference type="GO" id="GO:0005634">
    <property type="term" value="C:nucleus"/>
    <property type="evidence" value="ECO:0007669"/>
    <property type="project" value="UniProtKB-SubCell"/>
</dbReference>
<feature type="chain" id="PRO_0000202848" description="Uncharacterized protein YGR219W">
    <location>
        <begin position="1"/>
        <end position="113"/>
    </location>
</feature>
<gene>
    <name type="ordered locus">YGR219W</name>
</gene>
<name>YG4O_YEAST</name>
<keyword id="KW-0963">Cytoplasm</keyword>
<keyword id="KW-0539">Nucleus</keyword>
<keyword id="KW-1185">Reference proteome</keyword>
<proteinExistence type="evidence at protein level"/>
<accession>P53307</accession>
<comment type="subcellular location">
    <subcellularLocation>
        <location evidence="1">Cytoplasm</location>
    </subcellularLocation>
    <subcellularLocation>
        <location evidence="1">Nucleus</location>
    </subcellularLocation>
</comment>